<organism>
    <name type="scientific">Escherichia coli O81 (strain ED1a)</name>
    <dbReference type="NCBI Taxonomy" id="585397"/>
    <lineage>
        <taxon>Bacteria</taxon>
        <taxon>Pseudomonadati</taxon>
        <taxon>Pseudomonadota</taxon>
        <taxon>Gammaproteobacteria</taxon>
        <taxon>Enterobacterales</taxon>
        <taxon>Enterobacteriaceae</taxon>
        <taxon>Escherichia</taxon>
    </lineage>
</organism>
<reference key="1">
    <citation type="journal article" date="2009" name="PLoS Genet.">
        <title>Organised genome dynamics in the Escherichia coli species results in highly diverse adaptive paths.</title>
        <authorList>
            <person name="Touchon M."/>
            <person name="Hoede C."/>
            <person name="Tenaillon O."/>
            <person name="Barbe V."/>
            <person name="Baeriswyl S."/>
            <person name="Bidet P."/>
            <person name="Bingen E."/>
            <person name="Bonacorsi S."/>
            <person name="Bouchier C."/>
            <person name="Bouvet O."/>
            <person name="Calteau A."/>
            <person name="Chiapello H."/>
            <person name="Clermont O."/>
            <person name="Cruveiller S."/>
            <person name="Danchin A."/>
            <person name="Diard M."/>
            <person name="Dossat C."/>
            <person name="Karoui M.E."/>
            <person name="Frapy E."/>
            <person name="Garry L."/>
            <person name="Ghigo J.M."/>
            <person name="Gilles A.M."/>
            <person name="Johnson J."/>
            <person name="Le Bouguenec C."/>
            <person name="Lescat M."/>
            <person name="Mangenot S."/>
            <person name="Martinez-Jehanne V."/>
            <person name="Matic I."/>
            <person name="Nassif X."/>
            <person name="Oztas S."/>
            <person name="Petit M.A."/>
            <person name="Pichon C."/>
            <person name="Rouy Z."/>
            <person name="Ruf C.S."/>
            <person name="Schneider D."/>
            <person name="Tourret J."/>
            <person name="Vacherie B."/>
            <person name="Vallenet D."/>
            <person name="Medigue C."/>
            <person name="Rocha E.P.C."/>
            <person name="Denamur E."/>
        </authorList>
    </citation>
    <scope>NUCLEOTIDE SEQUENCE [LARGE SCALE GENOMIC DNA]</scope>
    <source>
        <strain>ED1a</strain>
    </source>
</reference>
<protein>
    <recommendedName>
        <fullName evidence="1">p-hydroxybenzoic acid efflux pump subunit AaeB</fullName>
        <shortName evidence="1">pHBA efflux pump protein B</shortName>
    </recommendedName>
</protein>
<comment type="function">
    <text evidence="1">Forms an efflux pump with AaeA. Could function as a metabolic relief valve, allowing to eliminate certain compounds when they accumulate to high levels in the cell.</text>
</comment>
<comment type="subcellular location">
    <subcellularLocation>
        <location evidence="1">Cell inner membrane</location>
        <topology evidence="1">Multi-pass membrane protein</topology>
    </subcellularLocation>
</comment>
<comment type="induction">
    <text evidence="1">Positively coregulated with aaeA and aaeX by AaeR.</text>
</comment>
<comment type="similarity">
    <text evidence="1">Belongs to the aromatic acid exporter ArAE (TC 2.A.85) family.</text>
</comment>
<gene>
    <name evidence="1" type="primary">aaeB</name>
    <name type="ordered locus">ECED1_3890</name>
</gene>
<proteinExistence type="inferred from homology"/>
<feature type="chain" id="PRO_1000185281" description="p-hydroxybenzoic acid efflux pump subunit AaeB">
    <location>
        <begin position="1"/>
        <end position="655"/>
    </location>
</feature>
<feature type="transmembrane region" description="Helical" evidence="1">
    <location>
        <begin position="13"/>
        <end position="33"/>
    </location>
</feature>
<feature type="transmembrane region" description="Helical" evidence="1">
    <location>
        <begin position="38"/>
        <end position="58"/>
    </location>
</feature>
<feature type="transmembrane region" description="Helical" evidence="1">
    <location>
        <begin position="69"/>
        <end position="89"/>
    </location>
</feature>
<feature type="transmembrane region" description="Helical" evidence="1">
    <location>
        <begin position="93"/>
        <end position="113"/>
    </location>
</feature>
<feature type="transmembrane region" description="Helical" evidence="1">
    <location>
        <begin position="121"/>
        <end position="141"/>
    </location>
</feature>
<feature type="transmembrane region" description="Helical" evidence="1">
    <location>
        <begin position="152"/>
        <end position="172"/>
    </location>
</feature>
<feature type="transmembrane region" description="Helical" evidence="1">
    <location>
        <begin position="370"/>
        <end position="390"/>
    </location>
</feature>
<feature type="transmembrane region" description="Helical" evidence="1">
    <location>
        <begin position="407"/>
        <end position="427"/>
    </location>
</feature>
<feature type="transmembrane region" description="Helical" evidence="1">
    <location>
        <begin position="431"/>
        <end position="451"/>
    </location>
</feature>
<feature type="transmembrane region" description="Helical" evidence="1">
    <location>
        <begin position="459"/>
        <end position="479"/>
    </location>
</feature>
<feature type="transmembrane region" description="Helical" evidence="1">
    <location>
        <begin position="482"/>
        <end position="502"/>
    </location>
</feature>
<keyword id="KW-0997">Cell inner membrane</keyword>
<keyword id="KW-1003">Cell membrane</keyword>
<keyword id="KW-0472">Membrane</keyword>
<keyword id="KW-0812">Transmembrane</keyword>
<keyword id="KW-1133">Transmembrane helix</keyword>
<keyword id="KW-0813">Transport</keyword>
<dbReference type="EMBL" id="CU928162">
    <property type="protein sequence ID" value="CAR10030.2"/>
    <property type="molecule type" value="Genomic_DNA"/>
</dbReference>
<dbReference type="RefSeq" id="WP_000510951.1">
    <property type="nucleotide sequence ID" value="NC_011745.1"/>
</dbReference>
<dbReference type="SMR" id="B7N112"/>
<dbReference type="KEGG" id="ecq:ECED1_3890"/>
<dbReference type="HOGENOM" id="CLU_027647_0_0_6"/>
<dbReference type="Proteomes" id="UP000000748">
    <property type="component" value="Chromosome"/>
</dbReference>
<dbReference type="GO" id="GO:0005886">
    <property type="term" value="C:plasma membrane"/>
    <property type="evidence" value="ECO:0007669"/>
    <property type="project" value="UniProtKB-SubCell"/>
</dbReference>
<dbReference type="GO" id="GO:0022857">
    <property type="term" value="F:transmembrane transporter activity"/>
    <property type="evidence" value="ECO:0007669"/>
    <property type="project" value="UniProtKB-UniRule"/>
</dbReference>
<dbReference type="GO" id="GO:0046942">
    <property type="term" value="P:carboxylic acid transport"/>
    <property type="evidence" value="ECO:0007669"/>
    <property type="project" value="InterPro"/>
</dbReference>
<dbReference type="HAMAP" id="MF_01545">
    <property type="entry name" value="AaeB"/>
    <property type="match status" value="1"/>
</dbReference>
<dbReference type="InterPro" id="IPR006726">
    <property type="entry name" value="PHBA_efflux_AaeB/fusaric-R"/>
</dbReference>
<dbReference type="InterPro" id="IPR023706">
    <property type="entry name" value="PHBA_efflux_pump_AaeB"/>
</dbReference>
<dbReference type="NCBIfam" id="NF007916">
    <property type="entry name" value="PRK10631.1"/>
    <property type="match status" value="1"/>
</dbReference>
<dbReference type="PANTHER" id="PTHR30509:SF9">
    <property type="entry name" value="MULTIDRUG RESISTANCE PROTEIN MDTO"/>
    <property type="match status" value="1"/>
</dbReference>
<dbReference type="PANTHER" id="PTHR30509">
    <property type="entry name" value="P-HYDROXYBENZOIC ACID EFFLUX PUMP SUBUNIT-RELATED"/>
    <property type="match status" value="1"/>
</dbReference>
<dbReference type="Pfam" id="PF04632">
    <property type="entry name" value="FUSC"/>
    <property type="match status" value="1"/>
</dbReference>
<name>AAEB_ECO81</name>
<accession>B7N112</accession>
<sequence length="655" mass="73625">MGIFSIANQHIRFAVKLATAIVLALFVGFHFQLETPRWAVLTAAIVAAGPAFAAGGEPYSGAIRYRGFLRIIGTFIGCIAGLVIIIAMIRAPLLMILVCCIWAGFCTWISSLVRIENSYAWGLAGYTALIIVITIQPEPLLTPQFAVERCSEIVIGIVCAIMADLLFSPRSIKQEVDRELESLLVAQYQLMQLCIKHGDGEVVDKAWGDLVRRTTALQGMRSNLNMESSRWARANRRLKAINTLSLTLITQSCETYLIQNTRPELITDTFREFFDTPVETAQDVHKQLKRLRRVIAWTGERETPVTIYSWVAAATRYQLLKRGVISNTKINATEEEILQGEPEVKVESAERHHAMVNFWRTTLSCILGTLFWLWTGWTSGSGAMVMIAVVTSLAMRLPNPRMVAIDFIYGTLAALPLGLLYFLVIIPNTQQSMLLLCISLAVLGFFLGIEVQKRRLGSMGALASTINIIVLDNPMTFHFSQFLDSALGQIVGCVLAFTVILLVRDKSRDRTGRVLLNQFVSAAVSAMTTNVARRKENHLPALYQQLFLLMNKFPGDLPKFRLALTMIIAHQRLRDAPIPINEDLSAFHRQMRRTADHVISARSDDKRRRYFGQLLEELEIYQEKLRIWQAPPQVTEPVHRLAGMLHKYQHALTDS</sequence>
<evidence type="ECO:0000255" key="1">
    <source>
        <dbReference type="HAMAP-Rule" id="MF_01545"/>
    </source>
</evidence>